<feature type="initiator methionine" description="Removed" evidence="1">
    <location>
        <position position="1"/>
    </location>
</feature>
<feature type="chain" id="PRO_0000135417" description="Glutamine--fructose-6-phosphate aminotransferase [isomerizing]">
    <location>
        <begin position="2"/>
        <end position="609"/>
    </location>
</feature>
<feature type="domain" description="Glutamine amidotransferase type-2" evidence="1">
    <location>
        <begin position="2"/>
        <end position="217"/>
    </location>
</feature>
<feature type="domain" description="SIS 1" evidence="1">
    <location>
        <begin position="285"/>
        <end position="425"/>
    </location>
</feature>
<feature type="domain" description="SIS 2" evidence="1">
    <location>
        <begin position="458"/>
        <end position="599"/>
    </location>
</feature>
<feature type="active site" description="Nucleophile; for GATase activity" evidence="1">
    <location>
        <position position="2"/>
    </location>
</feature>
<feature type="active site" description="For Fru-6P isomerization activity" evidence="1">
    <location>
        <position position="604"/>
    </location>
</feature>
<sequence length="609" mass="66031">MCGIVGAIAGRDVVPVLIEGLKRLEYRGYDSSGIAVLESGSIRRVRRTGRVAEMAVAATQEGFTASLGIGHTRWATHGGVTEANAHPHVSHGVVLVHNGIIENYEVQRERLSAFGYVFQSQTDTEVIAHLIHYYMQQGGDLLGALQCAVKALTGIYALAVMSQAEPGRFVCARMGCPLLIGIGDGESFVASDISALIQATRQVIFLEDGDTAEIRRDGISIFNAEQCPVERSLHLSNVSLSSLELGEFRHFMQKEIHEQPRVLADTMEAAIDAAGFPPMLFGAQAESVFRGITGIQILACGTSYYAGLTARYWIEAIAGLPCQVEIASEYRYRKAYVNPQHLVVTISQSGETLDTLEALKYAKALGHRHTLSICNAPDSAIPRISELICYTRAGPEIGVASTKAFTTQLVVLFQLAVALGVLRGAVDAEGEAAYLEQLRQLPCSVQQALNLEPQIAGWAECFSSRHHALFLGRGLHYPIALEGALKLKEISYIHAEAYPAGELKHGPLALVDADMPVVVIAPNDSLLEKVKSNMQEVRARGGELFVFADQDSHFSESEGLHVIRTLRHTGVLSPLVHTIPVQLLAYHTALVRGTDVDKPRNLAKSVTVE</sequence>
<reference key="1">
    <citation type="journal article" date="2003" name="J. Bacteriol.">
        <title>Comparative analyses of the complete genome sequences of Pierce's disease and citrus variegated chlorosis strains of Xylella fastidiosa.</title>
        <authorList>
            <person name="Van Sluys M.A."/>
            <person name="de Oliveira M.C."/>
            <person name="Monteiro-Vitorello C.B."/>
            <person name="Miyaki C.Y."/>
            <person name="Furlan L.R."/>
            <person name="Camargo L.E.A."/>
            <person name="da Silva A.C.R."/>
            <person name="Moon D.H."/>
            <person name="Takita M.A."/>
            <person name="Lemos E.G.M."/>
            <person name="Machado M.A."/>
            <person name="Ferro M.I.T."/>
            <person name="da Silva F.R."/>
            <person name="Goldman M.H.S."/>
            <person name="Goldman G.H."/>
            <person name="Lemos M.V.F."/>
            <person name="El-Dorry H."/>
            <person name="Tsai S.M."/>
            <person name="Carrer H."/>
            <person name="Carraro D.M."/>
            <person name="de Oliveira R.C."/>
            <person name="Nunes L.R."/>
            <person name="Siqueira W.J."/>
            <person name="Coutinho L.L."/>
            <person name="Kimura E.T."/>
            <person name="Ferro E.S."/>
            <person name="Harakava R."/>
            <person name="Kuramae E.E."/>
            <person name="Marino C.L."/>
            <person name="Giglioti E."/>
            <person name="Abreu I.L."/>
            <person name="Alves L.M.C."/>
            <person name="do Amaral A.M."/>
            <person name="Baia G.S."/>
            <person name="Blanco S.R."/>
            <person name="Brito M.S."/>
            <person name="Cannavan F.S."/>
            <person name="Celestino A.V."/>
            <person name="da Cunha A.F."/>
            <person name="Fenille R.C."/>
            <person name="Ferro J.A."/>
            <person name="Formighieri E.F."/>
            <person name="Kishi L.T."/>
            <person name="Leoni S.G."/>
            <person name="Oliveira A.R."/>
            <person name="Rosa V.E. Jr."/>
            <person name="Sassaki F.T."/>
            <person name="Sena J.A.D."/>
            <person name="de Souza A.A."/>
            <person name="Truffi D."/>
            <person name="Tsukumo F."/>
            <person name="Yanai G.M."/>
            <person name="Zaros L.G."/>
            <person name="Civerolo E.L."/>
            <person name="Simpson A.J.G."/>
            <person name="Almeida N.F. Jr."/>
            <person name="Setubal J.C."/>
            <person name="Kitajima J.P."/>
        </authorList>
    </citation>
    <scope>NUCLEOTIDE SEQUENCE [LARGE SCALE GENOMIC DNA]</scope>
    <source>
        <strain>Temecula1 / ATCC 700964</strain>
    </source>
</reference>
<proteinExistence type="inferred from homology"/>
<organism>
    <name type="scientific">Xylella fastidiosa (strain Temecula1 / ATCC 700964)</name>
    <dbReference type="NCBI Taxonomy" id="183190"/>
    <lineage>
        <taxon>Bacteria</taxon>
        <taxon>Pseudomonadati</taxon>
        <taxon>Pseudomonadota</taxon>
        <taxon>Gammaproteobacteria</taxon>
        <taxon>Lysobacterales</taxon>
        <taxon>Lysobacteraceae</taxon>
        <taxon>Xylella</taxon>
    </lineage>
</organism>
<comment type="function">
    <text evidence="1">Catalyzes the first step in hexosamine metabolism, converting fructose-6P into glucosamine-6P using glutamine as a nitrogen source.</text>
</comment>
<comment type="catalytic activity">
    <reaction evidence="1">
        <text>D-fructose 6-phosphate + L-glutamine = D-glucosamine 6-phosphate + L-glutamate</text>
        <dbReference type="Rhea" id="RHEA:13237"/>
        <dbReference type="ChEBI" id="CHEBI:29985"/>
        <dbReference type="ChEBI" id="CHEBI:58359"/>
        <dbReference type="ChEBI" id="CHEBI:58725"/>
        <dbReference type="ChEBI" id="CHEBI:61527"/>
        <dbReference type="EC" id="2.6.1.16"/>
    </reaction>
</comment>
<comment type="subunit">
    <text evidence="1">Homodimer.</text>
</comment>
<comment type="subcellular location">
    <subcellularLocation>
        <location evidence="1">Cytoplasm</location>
    </subcellularLocation>
</comment>
<accession>Q87F28</accession>
<gene>
    <name evidence="1" type="primary">glmS</name>
    <name type="ordered locus">PD_0110</name>
</gene>
<protein>
    <recommendedName>
        <fullName evidence="1">Glutamine--fructose-6-phosphate aminotransferase [isomerizing]</fullName>
        <ecNumber evidence="1">2.6.1.16</ecNumber>
    </recommendedName>
    <alternativeName>
        <fullName evidence="1">D-fructose-6-phosphate amidotransferase</fullName>
    </alternativeName>
    <alternativeName>
        <fullName evidence="1">GFAT</fullName>
    </alternativeName>
    <alternativeName>
        <fullName evidence="1">Glucosamine-6-phosphate synthase</fullName>
    </alternativeName>
    <alternativeName>
        <fullName evidence="1">Hexosephosphate aminotransferase</fullName>
    </alternativeName>
    <alternativeName>
        <fullName evidence="1">L-glutamine--D-fructose-6-phosphate amidotransferase</fullName>
    </alternativeName>
</protein>
<dbReference type="EC" id="2.6.1.16" evidence="1"/>
<dbReference type="EMBL" id="AE009442">
    <property type="protein sequence ID" value="AAO28009.1"/>
    <property type="molecule type" value="Genomic_DNA"/>
</dbReference>
<dbReference type="RefSeq" id="WP_004087594.1">
    <property type="nucleotide sequence ID" value="NC_004556.1"/>
</dbReference>
<dbReference type="SMR" id="Q87F28"/>
<dbReference type="GeneID" id="93903801"/>
<dbReference type="KEGG" id="xft:PD_0110"/>
<dbReference type="HOGENOM" id="CLU_012520_5_2_6"/>
<dbReference type="Proteomes" id="UP000002516">
    <property type="component" value="Chromosome"/>
</dbReference>
<dbReference type="GO" id="GO:0005829">
    <property type="term" value="C:cytosol"/>
    <property type="evidence" value="ECO:0007669"/>
    <property type="project" value="TreeGrafter"/>
</dbReference>
<dbReference type="GO" id="GO:0097367">
    <property type="term" value="F:carbohydrate derivative binding"/>
    <property type="evidence" value="ECO:0007669"/>
    <property type="project" value="InterPro"/>
</dbReference>
<dbReference type="GO" id="GO:0004360">
    <property type="term" value="F:glutamine-fructose-6-phosphate transaminase (isomerizing) activity"/>
    <property type="evidence" value="ECO:0007669"/>
    <property type="project" value="UniProtKB-UniRule"/>
</dbReference>
<dbReference type="GO" id="GO:0005975">
    <property type="term" value="P:carbohydrate metabolic process"/>
    <property type="evidence" value="ECO:0007669"/>
    <property type="project" value="UniProtKB-UniRule"/>
</dbReference>
<dbReference type="GO" id="GO:0006002">
    <property type="term" value="P:fructose 6-phosphate metabolic process"/>
    <property type="evidence" value="ECO:0007669"/>
    <property type="project" value="TreeGrafter"/>
</dbReference>
<dbReference type="GO" id="GO:0006487">
    <property type="term" value="P:protein N-linked glycosylation"/>
    <property type="evidence" value="ECO:0007669"/>
    <property type="project" value="TreeGrafter"/>
</dbReference>
<dbReference type="GO" id="GO:0006047">
    <property type="term" value="P:UDP-N-acetylglucosamine metabolic process"/>
    <property type="evidence" value="ECO:0007669"/>
    <property type="project" value="TreeGrafter"/>
</dbReference>
<dbReference type="CDD" id="cd00714">
    <property type="entry name" value="GFAT"/>
    <property type="match status" value="1"/>
</dbReference>
<dbReference type="CDD" id="cd05008">
    <property type="entry name" value="SIS_GlmS_GlmD_1"/>
    <property type="match status" value="1"/>
</dbReference>
<dbReference type="CDD" id="cd05009">
    <property type="entry name" value="SIS_GlmS_GlmD_2"/>
    <property type="match status" value="1"/>
</dbReference>
<dbReference type="FunFam" id="3.40.50.10490:FF:000001">
    <property type="entry name" value="Glutamine--fructose-6-phosphate aminotransferase [isomerizing]"/>
    <property type="match status" value="1"/>
</dbReference>
<dbReference type="FunFam" id="3.40.50.10490:FF:000002">
    <property type="entry name" value="Glutamine--fructose-6-phosphate aminotransferase [isomerizing]"/>
    <property type="match status" value="1"/>
</dbReference>
<dbReference type="FunFam" id="3.60.20.10:FF:000006">
    <property type="entry name" value="Glutamine--fructose-6-phosphate aminotransferase [isomerizing]"/>
    <property type="match status" value="1"/>
</dbReference>
<dbReference type="Gene3D" id="3.40.50.10490">
    <property type="entry name" value="Glucose-6-phosphate isomerase like protein, domain 1"/>
    <property type="match status" value="2"/>
</dbReference>
<dbReference type="Gene3D" id="3.60.20.10">
    <property type="entry name" value="Glutamine Phosphoribosylpyrophosphate, subunit 1, domain 1"/>
    <property type="match status" value="1"/>
</dbReference>
<dbReference type="HAMAP" id="MF_00164">
    <property type="entry name" value="GlmS"/>
    <property type="match status" value="1"/>
</dbReference>
<dbReference type="InterPro" id="IPR017932">
    <property type="entry name" value="GATase_2_dom"/>
</dbReference>
<dbReference type="InterPro" id="IPR005855">
    <property type="entry name" value="GFAT"/>
</dbReference>
<dbReference type="InterPro" id="IPR047084">
    <property type="entry name" value="GFAT_N"/>
</dbReference>
<dbReference type="InterPro" id="IPR035466">
    <property type="entry name" value="GlmS/AgaS_SIS"/>
</dbReference>
<dbReference type="InterPro" id="IPR035490">
    <property type="entry name" value="GlmS/FrlB_SIS"/>
</dbReference>
<dbReference type="InterPro" id="IPR029055">
    <property type="entry name" value="Ntn_hydrolases_N"/>
</dbReference>
<dbReference type="InterPro" id="IPR001347">
    <property type="entry name" value="SIS_dom"/>
</dbReference>
<dbReference type="InterPro" id="IPR046348">
    <property type="entry name" value="SIS_dom_sf"/>
</dbReference>
<dbReference type="NCBIfam" id="TIGR01135">
    <property type="entry name" value="glmS"/>
    <property type="match status" value="1"/>
</dbReference>
<dbReference type="NCBIfam" id="NF001484">
    <property type="entry name" value="PRK00331.1"/>
    <property type="match status" value="1"/>
</dbReference>
<dbReference type="PANTHER" id="PTHR10937">
    <property type="entry name" value="GLUCOSAMINE--FRUCTOSE-6-PHOSPHATE AMINOTRANSFERASE, ISOMERIZING"/>
    <property type="match status" value="1"/>
</dbReference>
<dbReference type="PANTHER" id="PTHR10937:SF0">
    <property type="entry name" value="GLUTAMINE--FRUCTOSE-6-PHOSPHATE TRANSAMINASE (ISOMERIZING)"/>
    <property type="match status" value="1"/>
</dbReference>
<dbReference type="Pfam" id="PF13522">
    <property type="entry name" value="GATase_6"/>
    <property type="match status" value="1"/>
</dbReference>
<dbReference type="Pfam" id="PF01380">
    <property type="entry name" value="SIS"/>
    <property type="match status" value="2"/>
</dbReference>
<dbReference type="SUPFAM" id="SSF56235">
    <property type="entry name" value="N-terminal nucleophile aminohydrolases (Ntn hydrolases)"/>
    <property type="match status" value="1"/>
</dbReference>
<dbReference type="SUPFAM" id="SSF53697">
    <property type="entry name" value="SIS domain"/>
    <property type="match status" value="1"/>
</dbReference>
<dbReference type="PROSITE" id="PS51278">
    <property type="entry name" value="GATASE_TYPE_2"/>
    <property type="match status" value="1"/>
</dbReference>
<dbReference type="PROSITE" id="PS51464">
    <property type="entry name" value="SIS"/>
    <property type="match status" value="2"/>
</dbReference>
<name>GLMS_XYLFT</name>
<keyword id="KW-0032">Aminotransferase</keyword>
<keyword id="KW-0963">Cytoplasm</keyword>
<keyword id="KW-0315">Glutamine amidotransferase</keyword>
<keyword id="KW-1185">Reference proteome</keyword>
<keyword id="KW-0677">Repeat</keyword>
<keyword id="KW-0808">Transferase</keyword>
<evidence type="ECO:0000255" key="1">
    <source>
        <dbReference type="HAMAP-Rule" id="MF_00164"/>
    </source>
</evidence>